<evidence type="ECO:0000250" key="1"/>
<evidence type="ECO:0000255" key="2">
    <source>
        <dbReference type="PROSITE-ProRule" id="PRU00541"/>
    </source>
</evidence>
<evidence type="ECO:0000255" key="3">
    <source>
        <dbReference type="PROSITE-ProRule" id="PRU00542"/>
    </source>
</evidence>
<evidence type="ECO:0000256" key="4">
    <source>
        <dbReference type="SAM" id="MobiDB-lite"/>
    </source>
</evidence>
<evidence type="ECO:0000305" key="5"/>
<dbReference type="EC" id="3.6.4.13"/>
<dbReference type="EMBL" id="CP009816">
    <property type="protein sequence ID" value="ATZ55735.1"/>
    <property type="molecule type" value="Genomic_DNA"/>
</dbReference>
<dbReference type="SMR" id="A6RSH5"/>
<dbReference type="EnsemblFungi" id="Bcin12g03020.1">
    <property type="protein sequence ID" value="Bcin12p03020.1"/>
    <property type="gene ID" value="Bcin12g03020"/>
</dbReference>
<dbReference type="GeneID" id="5438779"/>
<dbReference type="KEGG" id="bfu:BCIN_12g03020"/>
<dbReference type="VEuPathDB" id="FungiDB:Bcin12g03020"/>
<dbReference type="OMA" id="AVHIKAD"/>
<dbReference type="OrthoDB" id="422663at2759"/>
<dbReference type="Proteomes" id="UP000001798">
    <property type="component" value="Chromosome bcin12"/>
</dbReference>
<dbReference type="GO" id="GO:0005730">
    <property type="term" value="C:nucleolus"/>
    <property type="evidence" value="ECO:0007669"/>
    <property type="project" value="UniProtKB-SubCell"/>
</dbReference>
<dbReference type="GO" id="GO:0005524">
    <property type="term" value="F:ATP binding"/>
    <property type="evidence" value="ECO:0007669"/>
    <property type="project" value="UniProtKB-KW"/>
</dbReference>
<dbReference type="GO" id="GO:0016887">
    <property type="term" value="F:ATP hydrolysis activity"/>
    <property type="evidence" value="ECO:0007669"/>
    <property type="project" value="RHEA"/>
</dbReference>
<dbReference type="GO" id="GO:0003723">
    <property type="term" value="F:RNA binding"/>
    <property type="evidence" value="ECO:0007669"/>
    <property type="project" value="UniProtKB-KW"/>
</dbReference>
<dbReference type="GO" id="GO:0003724">
    <property type="term" value="F:RNA helicase activity"/>
    <property type="evidence" value="ECO:0007669"/>
    <property type="project" value="UniProtKB-EC"/>
</dbReference>
<dbReference type="GO" id="GO:0000464">
    <property type="term" value="P:endonucleolytic cleavage in ITS1 upstream of 5.8S rRNA from tricistronic rRNA transcript (SSU-rRNA, 5.8S rRNA, LSU-rRNA)"/>
    <property type="evidence" value="ECO:0007669"/>
    <property type="project" value="EnsemblFungi"/>
</dbReference>
<dbReference type="CDD" id="cd17949">
    <property type="entry name" value="DEADc_DDX31"/>
    <property type="match status" value="1"/>
</dbReference>
<dbReference type="CDD" id="cd18787">
    <property type="entry name" value="SF2_C_DEAD"/>
    <property type="match status" value="1"/>
</dbReference>
<dbReference type="Gene3D" id="3.40.50.300">
    <property type="entry name" value="P-loop containing nucleotide triphosphate hydrolases"/>
    <property type="match status" value="2"/>
</dbReference>
<dbReference type="InterPro" id="IPR011545">
    <property type="entry name" value="DEAD/DEAH_box_helicase_dom"/>
</dbReference>
<dbReference type="InterPro" id="IPR014001">
    <property type="entry name" value="Helicase_ATP-bd"/>
</dbReference>
<dbReference type="InterPro" id="IPR001650">
    <property type="entry name" value="Helicase_C-like"/>
</dbReference>
<dbReference type="InterPro" id="IPR027417">
    <property type="entry name" value="P-loop_NTPase"/>
</dbReference>
<dbReference type="InterPro" id="IPR025313">
    <property type="entry name" value="SPB4-like_CTE"/>
</dbReference>
<dbReference type="PANTHER" id="PTHR24031">
    <property type="entry name" value="RNA HELICASE"/>
    <property type="match status" value="1"/>
</dbReference>
<dbReference type="Pfam" id="PF13959">
    <property type="entry name" value="CTE_SPB4"/>
    <property type="match status" value="1"/>
</dbReference>
<dbReference type="Pfam" id="PF00270">
    <property type="entry name" value="DEAD"/>
    <property type="match status" value="1"/>
</dbReference>
<dbReference type="Pfam" id="PF00271">
    <property type="entry name" value="Helicase_C"/>
    <property type="match status" value="1"/>
</dbReference>
<dbReference type="SMART" id="SM00487">
    <property type="entry name" value="DEXDc"/>
    <property type="match status" value="1"/>
</dbReference>
<dbReference type="SMART" id="SM01178">
    <property type="entry name" value="DUF4217"/>
    <property type="match status" value="1"/>
</dbReference>
<dbReference type="SMART" id="SM00490">
    <property type="entry name" value="HELICc"/>
    <property type="match status" value="1"/>
</dbReference>
<dbReference type="SUPFAM" id="SSF52540">
    <property type="entry name" value="P-loop containing nucleoside triphosphate hydrolases"/>
    <property type="match status" value="2"/>
</dbReference>
<dbReference type="PROSITE" id="PS51192">
    <property type="entry name" value="HELICASE_ATP_BIND_1"/>
    <property type="match status" value="1"/>
</dbReference>
<dbReference type="PROSITE" id="PS51194">
    <property type="entry name" value="HELICASE_CTER"/>
    <property type="match status" value="1"/>
</dbReference>
<dbReference type="PROSITE" id="PS51195">
    <property type="entry name" value="Q_MOTIF"/>
    <property type="match status" value="1"/>
</dbReference>
<organism>
    <name type="scientific">Botryotinia fuckeliana (strain B05.10)</name>
    <name type="common">Noble rot fungus</name>
    <name type="synonym">Botrytis cinerea</name>
    <dbReference type="NCBI Taxonomy" id="332648"/>
    <lineage>
        <taxon>Eukaryota</taxon>
        <taxon>Fungi</taxon>
        <taxon>Dikarya</taxon>
        <taxon>Ascomycota</taxon>
        <taxon>Pezizomycotina</taxon>
        <taxon>Leotiomycetes</taxon>
        <taxon>Helotiales</taxon>
        <taxon>Sclerotiniaceae</taxon>
        <taxon>Botrytis</taxon>
    </lineage>
</organism>
<proteinExistence type="inferred from homology"/>
<comment type="function">
    <text evidence="1">ATP-binding RNA helicase involved in the biogenesis of 60S ribosomal subunits and is required for the normal formation of 25S and 5.8S rRNAs.</text>
</comment>
<comment type="catalytic activity">
    <reaction>
        <text>ATP + H2O = ADP + phosphate + H(+)</text>
        <dbReference type="Rhea" id="RHEA:13065"/>
        <dbReference type="ChEBI" id="CHEBI:15377"/>
        <dbReference type="ChEBI" id="CHEBI:15378"/>
        <dbReference type="ChEBI" id="CHEBI:30616"/>
        <dbReference type="ChEBI" id="CHEBI:43474"/>
        <dbReference type="ChEBI" id="CHEBI:456216"/>
        <dbReference type="EC" id="3.6.4.13"/>
    </reaction>
</comment>
<comment type="subcellular location">
    <subcellularLocation>
        <location evidence="1">Nucleus</location>
        <location evidence="1">Nucleolus</location>
    </subcellularLocation>
</comment>
<comment type="domain">
    <text>The Q motif is unique to and characteristic of the DEAD box family of RNA helicases and controls ATP binding and hydrolysis.</text>
</comment>
<comment type="similarity">
    <text evidence="5">Belongs to the DEAD box helicase family. DDX31/DBP7 subfamily.</text>
</comment>
<sequence>MADDGMLMNFEIGDVPIVAKQAFKGGRWKDRLAAKKTAQHRVTKSTNKPSAREIFSEPQHDTSAEEYIGREASSRAPKRQRVDDNYNSYGGRNENTAAYASGKLPSGSINVGGGRKTTFQEEPRTAFVAGKLPPGSINIGGKKATQIEDEGRAAYASGKLPPGSINSGAKKAISFQDETRPAYVSGKLPHGSIDGMRNREMAAVHREIAEGGRKPGQVVSSLFTFNPTSKKTFDEPEEQAEPAKPSNAPLTEEMATFTNLGLSRRLAAHLSTKLDMKAPTAIQKASVQQLVSDDSDAFIQAETGSGKTLAYLLPIVERILALSENGVQIHRDSGLFAIILSPTRELCKQIAAVLEKVLRCAPWIVGTTVNGGESKQSEKARLRKGVNILVATPGRLADHLDNTEVLNVATVRWLVLDEGDRLMELGFEEEIKGIVEKIGRRSVAKANSDMGSLPKRRVTILCSATMKMNVQRLGEISLKDAVHIQADPSEQEKQDKENGVEAQDKAFSAPTQLKQSYAIVPAKLRLVTLTALLKRAFARKGSVMKAIVFISCADSVDFHFSLFSRTPEASAEVVDEEKVDLPALPKSELVKETIAHGTTISNNSNPVILHKLHGSLAQNIRTATLKAFSESADPCVMICTDVASRGLDLPNVDFVIEYDPPFSAEDHLHRVGRTARAGREGRALIFLMPGVEEEYVSILASGYREGKKALTRHTAEDLIQKGFGGIGREWEERATNFQLEVERWSLDSPKYLEMARRGYQSHIRAYATHVANERHIFNMQELHLGHLAKAFALRDKPGSIKVPGLRPAKMTKADRSVAARKAKRGEKAEDKAPEGERVRKQKKMELDLPTVDGNEAAARMKRKMKEHMAAASEFNIG</sequence>
<protein>
    <recommendedName>
        <fullName>ATP-dependent RNA helicase dbp7</fullName>
        <ecNumber>3.6.4.13</ecNumber>
    </recommendedName>
</protein>
<feature type="chain" id="PRO_0000310217" description="ATP-dependent RNA helicase dbp7">
    <location>
        <begin position="1"/>
        <end position="877"/>
    </location>
</feature>
<feature type="domain" description="Helicase ATP-binding" evidence="2">
    <location>
        <begin position="288"/>
        <end position="484"/>
    </location>
</feature>
<feature type="domain" description="Helicase C-terminal" evidence="3">
    <location>
        <begin position="512"/>
        <end position="719"/>
    </location>
</feature>
<feature type="region of interest" description="Disordered" evidence="4">
    <location>
        <begin position="34"/>
        <end position="101"/>
    </location>
</feature>
<feature type="region of interest" description="Disordered" evidence="4">
    <location>
        <begin position="814"/>
        <end position="845"/>
    </location>
</feature>
<feature type="short sequence motif" description="Q motif">
    <location>
        <begin position="255"/>
        <end position="284"/>
    </location>
</feature>
<feature type="short sequence motif" description="DEAD box">
    <location>
        <begin position="417"/>
        <end position="420"/>
    </location>
</feature>
<feature type="compositionally biased region" description="Basic and acidic residues" evidence="4">
    <location>
        <begin position="50"/>
        <end position="73"/>
    </location>
</feature>
<feature type="compositionally biased region" description="Polar residues" evidence="4">
    <location>
        <begin position="85"/>
        <end position="98"/>
    </location>
</feature>
<feature type="compositionally biased region" description="Basic and acidic residues" evidence="4">
    <location>
        <begin position="825"/>
        <end position="845"/>
    </location>
</feature>
<feature type="binding site" evidence="2">
    <location>
        <begin position="301"/>
        <end position="308"/>
    </location>
    <ligand>
        <name>ATP</name>
        <dbReference type="ChEBI" id="CHEBI:30616"/>
    </ligand>
</feature>
<accession>A6RSH5</accession>
<accession>A0A384JYS3</accession>
<keyword id="KW-0067">ATP-binding</keyword>
<keyword id="KW-0347">Helicase</keyword>
<keyword id="KW-0378">Hydrolase</keyword>
<keyword id="KW-0547">Nucleotide-binding</keyword>
<keyword id="KW-0539">Nucleus</keyword>
<keyword id="KW-1185">Reference proteome</keyword>
<keyword id="KW-0690">Ribosome biogenesis</keyword>
<keyword id="KW-0694">RNA-binding</keyword>
<keyword id="KW-0698">rRNA processing</keyword>
<gene>
    <name type="primary">dbp7</name>
    <name type="ORF">BC1G_03202</name>
    <name type="ORF">BCIN_12g03020</name>
</gene>
<reference key="1">
    <citation type="journal article" date="2011" name="PLoS Genet.">
        <title>Genomic analysis of the necrotrophic fungal pathogens Sclerotinia sclerotiorum and Botrytis cinerea.</title>
        <authorList>
            <person name="Amselem J."/>
            <person name="Cuomo C.A."/>
            <person name="van Kan J.A.L."/>
            <person name="Viaud M."/>
            <person name="Benito E.P."/>
            <person name="Couloux A."/>
            <person name="Coutinho P.M."/>
            <person name="de Vries R.P."/>
            <person name="Dyer P.S."/>
            <person name="Fillinger S."/>
            <person name="Fournier E."/>
            <person name="Gout L."/>
            <person name="Hahn M."/>
            <person name="Kohn L."/>
            <person name="Lapalu N."/>
            <person name="Plummer K.M."/>
            <person name="Pradier J.-M."/>
            <person name="Quevillon E."/>
            <person name="Sharon A."/>
            <person name="Simon A."/>
            <person name="ten Have A."/>
            <person name="Tudzynski B."/>
            <person name="Tudzynski P."/>
            <person name="Wincker P."/>
            <person name="Andrew M."/>
            <person name="Anthouard V."/>
            <person name="Beever R.E."/>
            <person name="Beffa R."/>
            <person name="Benoit I."/>
            <person name="Bouzid O."/>
            <person name="Brault B."/>
            <person name="Chen Z."/>
            <person name="Choquer M."/>
            <person name="Collemare J."/>
            <person name="Cotton P."/>
            <person name="Danchin E.G."/>
            <person name="Da Silva C."/>
            <person name="Gautier A."/>
            <person name="Giraud C."/>
            <person name="Giraud T."/>
            <person name="Gonzalez C."/>
            <person name="Grossetete S."/>
            <person name="Gueldener U."/>
            <person name="Henrissat B."/>
            <person name="Howlett B.J."/>
            <person name="Kodira C."/>
            <person name="Kretschmer M."/>
            <person name="Lappartient A."/>
            <person name="Leroch M."/>
            <person name="Levis C."/>
            <person name="Mauceli E."/>
            <person name="Neuveglise C."/>
            <person name="Oeser B."/>
            <person name="Pearson M."/>
            <person name="Poulain J."/>
            <person name="Poussereau N."/>
            <person name="Quesneville H."/>
            <person name="Rascle C."/>
            <person name="Schumacher J."/>
            <person name="Segurens B."/>
            <person name="Sexton A."/>
            <person name="Silva E."/>
            <person name="Sirven C."/>
            <person name="Soanes D.M."/>
            <person name="Talbot N.J."/>
            <person name="Templeton M."/>
            <person name="Yandava C."/>
            <person name="Yarden O."/>
            <person name="Zeng Q."/>
            <person name="Rollins J.A."/>
            <person name="Lebrun M.-H."/>
            <person name="Dickman M."/>
        </authorList>
    </citation>
    <scope>NUCLEOTIDE SEQUENCE [LARGE SCALE GENOMIC DNA]</scope>
    <source>
        <strain>B05.10</strain>
    </source>
</reference>
<reference key="2">
    <citation type="journal article" date="2012" name="Eukaryot. Cell">
        <title>Genome update of Botrytis cinerea strains B05.10 and T4.</title>
        <authorList>
            <person name="Staats M."/>
            <person name="van Kan J.A.L."/>
        </authorList>
    </citation>
    <scope>NUCLEOTIDE SEQUENCE [LARGE SCALE GENOMIC DNA]</scope>
    <scope>GENOME REANNOTATION</scope>
    <source>
        <strain>B05.10</strain>
    </source>
</reference>
<reference key="3">
    <citation type="journal article" date="2017" name="Mol. Plant Pathol.">
        <title>A gapless genome sequence of the fungus Botrytis cinerea.</title>
        <authorList>
            <person name="van Kan J.A.L."/>
            <person name="Stassen J.H.M."/>
            <person name="Mosbach A."/>
            <person name="van der Lee T.A.J."/>
            <person name="Faino L."/>
            <person name="Farmer A.D."/>
            <person name="Papasotiriou D.G."/>
            <person name="Zhou S."/>
            <person name="Seidl M.F."/>
            <person name="Cottam E."/>
            <person name="Edel D."/>
            <person name="Hahn M."/>
            <person name="Schwartz D.C."/>
            <person name="Dietrich R.A."/>
            <person name="Widdison S."/>
            <person name="Scalliet G."/>
        </authorList>
    </citation>
    <scope>NUCLEOTIDE SEQUENCE [LARGE SCALE GENOMIC DNA]</scope>
    <scope>GENOME REANNOTATION</scope>
    <source>
        <strain>B05.10</strain>
    </source>
</reference>
<name>DBP7_BOTFB</name>